<keyword id="KW-0963">Cytoplasm</keyword>
<keyword id="KW-0324">Glycolysis</keyword>
<keyword id="KW-0456">Lyase</keyword>
<keyword id="KW-0460">Magnesium</keyword>
<keyword id="KW-0479">Metal-binding</keyword>
<keyword id="KW-0964">Secreted</keyword>
<comment type="function">
    <text evidence="1">Catalyzes the reversible conversion of 2-phosphoglycerate (2-PG) into phosphoenolpyruvate (PEP). It is essential for the degradation of carbohydrates via glycolysis.</text>
</comment>
<comment type="catalytic activity">
    <reaction evidence="1">
        <text>(2R)-2-phosphoglycerate = phosphoenolpyruvate + H2O</text>
        <dbReference type="Rhea" id="RHEA:10164"/>
        <dbReference type="ChEBI" id="CHEBI:15377"/>
        <dbReference type="ChEBI" id="CHEBI:58289"/>
        <dbReference type="ChEBI" id="CHEBI:58702"/>
        <dbReference type="EC" id="4.2.1.11"/>
    </reaction>
</comment>
<comment type="cofactor">
    <cofactor evidence="1">
        <name>Mg(2+)</name>
        <dbReference type="ChEBI" id="CHEBI:18420"/>
    </cofactor>
    <text evidence="1">Binds a second Mg(2+) ion via substrate during catalysis.</text>
</comment>
<comment type="pathway">
    <text evidence="1">Carbohydrate degradation; glycolysis; pyruvate from D-glyceraldehyde 3-phosphate: step 4/5.</text>
</comment>
<comment type="subcellular location">
    <subcellularLocation>
        <location evidence="1">Cytoplasm</location>
    </subcellularLocation>
    <subcellularLocation>
        <location evidence="1">Secreted</location>
    </subcellularLocation>
    <subcellularLocation>
        <location evidence="1">Cell surface</location>
    </subcellularLocation>
    <text evidence="1">Fractions of enolase are present in both the cytoplasm and on the cell surface.</text>
</comment>
<comment type="similarity">
    <text evidence="1">Belongs to the enolase family.</text>
</comment>
<evidence type="ECO:0000255" key="1">
    <source>
        <dbReference type="HAMAP-Rule" id="MF_00318"/>
    </source>
</evidence>
<proteinExistence type="inferred from homology"/>
<accession>C5D7M1</accession>
<name>ENO_GEOSW</name>
<dbReference type="EC" id="4.2.1.11" evidence="1"/>
<dbReference type="EMBL" id="CP001638">
    <property type="protein sequence ID" value="ACS25631.1"/>
    <property type="molecule type" value="Genomic_DNA"/>
</dbReference>
<dbReference type="SMR" id="C5D7M1"/>
<dbReference type="STRING" id="471223.GWCH70_2958"/>
<dbReference type="KEGG" id="gwc:GWCH70_2958"/>
<dbReference type="eggNOG" id="COG0148">
    <property type="taxonomic scope" value="Bacteria"/>
</dbReference>
<dbReference type="HOGENOM" id="CLU_031223_2_1_9"/>
<dbReference type="OrthoDB" id="9804716at2"/>
<dbReference type="UniPathway" id="UPA00109">
    <property type="reaction ID" value="UER00187"/>
</dbReference>
<dbReference type="GO" id="GO:0009986">
    <property type="term" value="C:cell surface"/>
    <property type="evidence" value="ECO:0007669"/>
    <property type="project" value="UniProtKB-SubCell"/>
</dbReference>
<dbReference type="GO" id="GO:0005576">
    <property type="term" value="C:extracellular region"/>
    <property type="evidence" value="ECO:0007669"/>
    <property type="project" value="UniProtKB-SubCell"/>
</dbReference>
<dbReference type="GO" id="GO:0000015">
    <property type="term" value="C:phosphopyruvate hydratase complex"/>
    <property type="evidence" value="ECO:0007669"/>
    <property type="project" value="InterPro"/>
</dbReference>
<dbReference type="GO" id="GO:0000287">
    <property type="term" value="F:magnesium ion binding"/>
    <property type="evidence" value="ECO:0007669"/>
    <property type="project" value="UniProtKB-UniRule"/>
</dbReference>
<dbReference type="GO" id="GO:0004634">
    <property type="term" value="F:phosphopyruvate hydratase activity"/>
    <property type="evidence" value="ECO:0007669"/>
    <property type="project" value="UniProtKB-UniRule"/>
</dbReference>
<dbReference type="GO" id="GO:0006096">
    <property type="term" value="P:glycolytic process"/>
    <property type="evidence" value="ECO:0007669"/>
    <property type="project" value="UniProtKB-UniRule"/>
</dbReference>
<dbReference type="CDD" id="cd03313">
    <property type="entry name" value="enolase"/>
    <property type="match status" value="1"/>
</dbReference>
<dbReference type="FunFam" id="3.20.20.120:FF:000001">
    <property type="entry name" value="Enolase"/>
    <property type="match status" value="1"/>
</dbReference>
<dbReference type="FunFam" id="3.30.390.10:FF:000001">
    <property type="entry name" value="Enolase"/>
    <property type="match status" value="1"/>
</dbReference>
<dbReference type="Gene3D" id="3.20.20.120">
    <property type="entry name" value="Enolase-like C-terminal domain"/>
    <property type="match status" value="1"/>
</dbReference>
<dbReference type="Gene3D" id="3.30.390.10">
    <property type="entry name" value="Enolase-like, N-terminal domain"/>
    <property type="match status" value="1"/>
</dbReference>
<dbReference type="HAMAP" id="MF_00318">
    <property type="entry name" value="Enolase"/>
    <property type="match status" value="1"/>
</dbReference>
<dbReference type="InterPro" id="IPR000941">
    <property type="entry name" value="Enolase"/>
</dbReference>
<dbReference type="InterPro" id="IPR036849">
    <property type="entry name" value="Enolase-like_C_sf"/>
</dbReference>
<dbReference type="InterPro" id="IPR029017">
    <property type="entry name" value="Enolase-like_N"/>
</dbReference>
<dbReference type="InterPro" id="IPR020810">
    <property type="entry name" value="Enolase_C"/>
</dbReference>
<dbReference type="InterPro" id="IPR020809">
    <property type="entry name" value="Enolase_CS"/>
</dbReference>
<dbReference type="InterPro" id="IPR020811">
    <property type="entry name" value="Enolase_N"/>
</dbReference>
<dbReference type="NCBIfam" id="TIGR01060">
    <property type="entry name" value="eno"/>
    <property type="match status" value="1"/>
</dbReference>
<dbReference type="PANTHER" id="PTHR11902">
    <property type="entry name" value="ENOLASE"/>
    <property type="match status" value="1"/>
</dbReference>
<dbReference type="PANTHER" id="PTHR11902:SF1">
    <property type="entry name" value="ENOLASE"/>
    <property type="match status" value="1"/>
</dbReference>
<dbReference type="Pfam" id="PF00113">
    <property type="entry name" value="Enolase_C"/>
    <property type="match status" value="1"/>
</dbReference>
<dbReference type="Pfam" id="PF03952">
    <property type="entry name" value="Enolase_N"/>
    <property type="match status" value="1"/>
</dbReference>
<dbReference type="PIRSF" id="PIRSF001400">
    <property type="entry name" value="Enolase"/>
    <property type="match status" value="1"/>
</dbReference>
<dbReference type="PRINTS" id="PR00148">
    <property type="entry name" value="ENOLASE"/>
</dbReference>
<dbReference type="SFLD" id="SFLDS00001">
    <property type="entry name" value="Enolase"/>
    <property type="match status" value="1"/>
</dbReference>
<dbReference type="SFLD" id="SFLDF00002">
    <property type="entry name" value="enolase"/>
    <property type="match status" value="1"/>
</dbReference>
<dbReference type="SMART" id="SM01192">
    <property type="entry name" value="Enolase_C"/>
    <property type="match status" value="1"/>
</dbReference>
<dbReference type="SMART" id="SM01193">
    <property type="entry name" value="Enolase_N"/>
    <property type="match status" value="1"/>
</dbReference>
<dbReference type="SUPFAM" id="SSF51604">
    <property type="entry name" value="Enolase C-terminal domain-like"/>
    <property type="match status" value="1"/>
</dbReference>
<dbReference type="SUPFAM" id="SSF54826">
    <property type="entry name" value="Enolase N-terminal domain-like"/>
    <property type="match status" value="1"/>
</dbReference>
<dbReference type="PROSITE" id="PS00164">
    <property type="entry name" value="ENOLASE"/>
    <property type="match status" value="1"/>
</dbReference>
<gene>
    <name evidence="1" type="primary">eno</name>
    <name type="ordered locus">GWCH70_2958</name>
</gene>
<sequence length="430" mass="46569">MSAIVDVYAREVLDSRGNPTVEVEVYTEDGGFGRALVPSGASTGEYEAVELRDGDKSRYLGKGVLKAVENVNEIIAPAIIGFEVTDQVGIDKTLIELDGTENKSKLGANAILGVSLAVARAAADELDMPLYQYLGGFNAKTLPVPMMNILNGGAHADNNVDIQEFMIMPVGAKSFREALRMGAEIFHSLKAVLKEKGYNTAVGDEGGFAPNLKSNEEALQTIIEAIEKAGYKPGEEVMLAMDVASSELYNKEDGKYHLEGEGVVKTSEEMVAWYEELVSKYPIISIEDGLDENDWEGHKLLTERLGKKVQLVGDDLFVTNTKKLAEGIEKGVGNSILIKVNQIGTLTETFDAIEMAKRAGYTAVVSHRSGETEDSTIADIAVATNAGQIKTGAPSRTDRVAKYNQLLRIEDQLGDTAIYNGIKSFYNLKK</sequence>
<protein>
    <recommendedName>
        <fullName evidence="1">Enolase</fullName>
        <ecNumber evidence="1">4.2.1.11</ecNumber>
    </recommendedName>
    <alternativeName>
        <fullName evidence="1">2-phospho-D-glycerate hydro-lyase</fullName>
    </alternativeName>
    <alternativeName>
        <fullName evidence="1">2-phosphoglycerate dehydratase</fullName>
    </alternativeName>
</protein>
<reference key="1">
    <citation type="submission" date="2009-06" db="EMBL/GenBank/DDBJ databases">
        <title>Complete sequence of chromosome of Geopacillus sp. WCH70.</title>
        <authorList>
            <consortium name="US DOE Joint Genome Institute"/>
            <person name="Lucas S."/>
            <person name="Copeland A."/>
            <person name="Lapidus A."/>
            <person name="Glavina del Rio T."/>
            <person name="Dalin E."/>
            <person name="Tice H."/>
            <person name="Bruce D."/>
            <person name="Goodwin L."/>
            <person name="Pitluck S."/>
            <person name="Chertkov O."/>
            <person name="Brettin T."/>
            <person name="Detter J.C."/>
            <person name="Han C."/>
            <person name="Larimer F."/>
            <person name="Land M."/>
            <person name="Hauser L."/>
            <person name="Kyrpides N."/>
            <person name="Mikhailova N."/>
            <person name="Brumm P."/>
            <person name="Mead D.A."/>
            <person name="Richardson P."/>
        </authorList>
    </citation>
    <scope>NUCLEOTIDE SEQUENCE [LARGE SCALE GENOMIC DNA]</scope>
    <source>
        <strain>WCH70</strain>
    </source>
</reference>
<feature type="chain" id="PRO_1000205097" description="Enolase">
    <location>
        <begin position="1"/>
        <end position="430"/>
    </location>
</feature>
<feature type="active site" description="Proton donor" evidence="1">
    <location>
        <position position="205"/>
    </location>
</feature>
<feature type="active site" description="Proton acceptor" evidence="1">
    <location>
        <position position="339"/>
    </location>
</feature>
<feature type="binding site" evidence="1">
    <location>
        <position position="163"/>
    </location>
    <ligand>
        <name>(2R)-2-phosphoglycerate</name>
        <dbReference type="ChEBI" id="CHEBI:58289"/>
    </ligand>
</feature>
<feature type="binding site" evidence="1">
    <location>
        <position position="242"/>
    </location>
    <ligand>
        <name>Mg(2+)</name>
        <dbReference type="ChEBI" id="CHEBI:18420"/>
    </ligand>
</feature>
<feature type="binding site" evidence="1">
    <location>
        <position position="287"/>
    </location>
    <ligand>
        <name>Mg(2+)</name>
        <dbReference type="ChEBI" id="CHEBI:18420"/>
    </ligand>
</feature>
<feature type="binding site" evidence="1">
    <location>
        <position position="314"/>
    </location>
    <ligand>
        <name>Mg(2+)</name>
        <dbReference type="ChEBI" id="CHEBI:18420"/>
    </ligand>
</feature>
<feature type="binding site" evidence="1">
    <location>
        <position position="339"/>
    </location>
    <ligand>
        <name>(2R)-2-phosphoglycerate</name>
        <dbReference type="ChEBI" id="CHEBI:58289"/>
    </ligand>
</feature>
<feature type="binding site" evidence="1">
    <location>
        <position position="368"/>
    </location>
    <ligand>
        <name>(2R)-2-phosphoglycerate</name>
        <dbReference type="ChEBI" id="CHEBI:58289"/>
    </ligand>
</feature>
<feature type="binding site" evidence="1">
    <location>
        <position position="369"/>
    </location>
    <ligand>
        <name>(2R)-2-phosphoglycerate</name>
        <dbReference type="ChEBI" id="CHEBI:58289"/>
    </ligand>
</feature>
<feature type="binding site" evidence="1">
    <location>
        <position position="390"/>
    </location>
    <ligand>
        <name>(2R)-2-phosphoglycerate</name>
        <dbReference type="ChEBI" id="CHEBI:58289"/>
    </ligand>
</feature>
<organism>
    <name type="scientific">Geobacillus sp. (strain WCH70)</name>
    <dbReference type="NCBI Taxonomy" id="471223"/>
    <lineage>
        <taxon>Bacteria</taxon>
        <taxon>Bacillati</taxon>
        <taxon>Bacillota</taxon>
        <taxon>Bacilli</taxon>
        <taxon>Bacillales</taxon>
        <taxon>Anoxybacillaceae</taxon>
        <taxon>Geobacillus</taxon>
    </lineage>
</organism>